<protein>
    <recommendedName>
        <fullName>Olfactory receptor 1A1</fullName>
    </recommendedName>
    <alternativeName>
        <fullName>Olfactory receptor 17-7</fullName>
        <shortName>OR17-7</shortName>
    </alternativeName>
    <alternativeName>
        <fullName>Olfactory receptor OR17-11</fullName>
    </alternativeName>
</protein>
<keyword id="KW-1003">Cell membrane</keyword>
<keyword id="KW-1015">Disulfide bond</keyword>
<keyword id="KW-0297">G-protein coupled receptor</keyword>
<keyword id="KW-0325">Glycoprotein</keyword>
<keyword id="KW-0472">Membrane</keyword>
<keyword id="KW-0552">Olfaction</keyword>
<keyword id="KW-0675">Receptor</keyword>
<keyword id="KW-1185">Reference proteome</keyword>
<keyword id="KW-0716">Sensory transduction</keyword>
<keyword id="KW-0807">Transducer</keyword>
<keyword id="KW-0812">Transmembrane</keyword>
<keyword id="KW-1133">Transmembrane helix</keyword>
<comment type="function">
    <text evidence="6">Odorant receptor.</text>
</comment>
<comment type="subcellular location">
    <subcellularLocation>
        <location>Cell membrane</location>
        <topology>Multi-pass membrane protein</topology>
    </subcellularLocation>
</comment>
<comment type="similarity">
    <text evidence="2">Belongs to the G-protein coupled receptor 1 family.</text>
</comment>
<comment type="online information" name="Human Olfactory Receptor Data Exploratorium (HORDE)">
    <link uri="http://genome.weizmann.ac.il/horde/card/index/symbol:OR1A1"/>
</comment>
<name>OR1A1_HUMAN</name>
<gene>
    <name type="primary">OR1A1</name>
</gene>
<proteinExistence type="evidence at transcript level"/>
<feature type="chain" id="PRO_0000150412" description="Olfactory receptor 1A1">
    <location>
        <begin position="1"/>
        <end position="309"/>
    </location>
</feature>
<feature type="topological domain" description="Extracellular" evidence="1">
    <location>
        <begin position="1"/>
        <end position="25"/>
    </location>
</feature>
<feature type="transmembrane region" description="Helical; Name=1" evidence="1">
    <location>
        <begin position="26"/>
        <end position="49"/>
    </location>
</feature>
<feature type="topological domain" description="Cytoplasmic" evidence="1">
    <location>
        <begin position="50"/>
        <end position="57"/>
    </location>
</feature>
<feature type="transmembrane region" description="Helical; Name=2" evidence="1">
    <location>
        <begin position="58"/>
        <end position="79"/>
    </location>
</feature>
<feature type="topological domain" description="Extracellular" evidence="1">
    <location>
        <begin position="80"/>
        <end position="100"/>
    </location>
</feature>
<feature type="transmembrane region" description="Helical; Name=3" evidence="1">
    <location>
        <begin position="101"/>
        <end position="120"/>
    </location>
</feature>
<feature type="topological domain" description="Cytoplasmic" evidence="1">
    <location>
        <begin position="121"/>
        <end position="139"/>
    </location>
</feature>
<feature type="transmembrane region" description="Helical; Name=4" evidence="1">
    <location>
        <begin position="140"/>
        <end position="158"/>
    </location>
</feature>
<feature type="topological domain" description="Extracellular" evidence="1">
    <location>
        <begin position="159"/>
        <end position="195"/>
    </location>
</feature>
<feature type="transmembrane region" description="Helical; Name=5" evidence="1">
    <location>
        <begin position="196"/>
        <end position="218"/>
    </location>
</feature>
<feature type="topological domain" description="Cytoplasmic" evidence="1">
    <location>
        <begin position="219"/>
        <end position="235"/>
    </location>
</feature>
<feature type="transmembrane region" description="Helical; Name=6" evidence="1">
    <location>
        <begin position="236"/>
        <end position="258"/>
    </location>
</feature>
<feature type="topological domain" description="Extracellular" evidence="1">
    <location>
        <begin position="259"/>
        <end position="270"/>
    </location>
</feature>
<feature type="transmembrane region" description="Helical; Name=7" evidence="1">
    <location>
        <begin position="271"/>
        <end position="290"/>
    </location>
</feature>
<feature type="topological domain" description="Cytoplasmic" evidence="1">
    <location>
        <begin position="291"/>
        <end position="309"/>
    </location>
</feature>
<feature type="glycosylation site" description="N-linked (GlcNAc...) asparagine" evidence="1">
    <location>
        <position position="5"/>
    </location>
</feature>
<feature type="glycosylation site" description="N-linked (GlcNAc...) asparagine" evidence="1">
    <location>
        <position position="264"/>
    </location>
</feature>
<feature type="disulfide bond" evidence="2">
    <location>
        <begin position="97"/>
        <end position="189"/>
    </location>
</feature>
<feature type="sequence variant" id="VAR_047080" description="In dbSNP:rs4375699." evidence="3 4">
    <original>R</original>
    <variation>H</variation>
    <location>
        <position position="128"/>
    </location>
</feature>
<feature type="sequence variant" id="VAR_034161" description="In dbSNP:rs17762735.">
    <original>V</original>
    <variation>M</variation>
    <location>
        <position position="233"/>
    </location>
</feature>
<feature type="sequence variant" id="VAR_020380" description="In dbSNP:rs769427." evidence="5">
    <original>P</original>
    <variation>S</variation>
    <location>
        <position position="285"/>
    </location>
</feature>
<evidence type="ECO:0000255" key="1"/>
<evidence type="ECO:0000255" key="2">
    <source>
        <dbReference type="PROSITE-ProRule" id="PRU00521"/>
    </source>
</evidence>
<evidence type="ECO:0000269" key="3">
    <source>
    </source>
</evidence>
<evidence type="ECO:0000269" key="4">
    <source>
    </source>
</evidence>
<evidence type="ECO:0000269" key="5">
    <source>
    </source>
</evidence>
<evidence type="ECO:0000305" key="6"/>
<organism>
    <name type="scientific">Homo sapiens</name>
    <name type="common">Human</name>
    <dbReference type="NCBI Taxonomy" id="9606"/>
    <lineage>
        <taxon>Eukaryota</taxon>
        <taxon>Metazoa</taxon>
        <taxon>Chordata</taxon>
        <taxon>Craniata</taxon>
        <taxon>Vertebrata</taxon>
        <taxon>Euteleostomi</taxon>
        <taxon>Mammalia</taxon>
        <taxon>Eutheria</taxon>
        <taxon>Euarchontoglires</taxon>
        <taxon>Primates</taxon>
        <taxon>Haplorrhini</taxon>
        <taxon>Catarrhini</taxon>
        <taxon>Hominidae</taxon>
        <taxon>Homo</taxon>
    </lineage>
</organism>
<dbReference type="EMBL" id="AF087918">
    <property type="protein sequence ID" value="AAF37311.1"/>
    <property type="molecule type" value="Genomic_DNA"/>
</dbReference>
<dbReference type="EMBL" id="CH471108">
    <property type="protein sequence ID" value="EAW90520.1"/>
    <property type="molecule type" value="Genomic_DNA"/>
</dbReference>
<dbReference type="EMBL" id="BC069169">
    <property type="protein sequence ID" value="AAH69169.1"/>
    <property type="molecule type" value="mRNA"/>
</dbReference>
<dbReference type="EMBL" id="BC128248">
    <property type="protein sequence ID" value="AAI28249.1"/>
    <property type="molecule type" value="mRNA"/>
</dbReference>
<dbReference type="EMBL" id="BC141934">
    <property type="protein sequence ID" value="AAI41935.1"/>
    <property type="molecule type" value="mRNA"/>
</dbReference>
<dbReference type="EMBL" id="BC141935">
    <property type="protein sequence ID" value="AAI41936.1"/>
    <property type="molecule type" value="mRNA"/>
</dbReference>
<dbReference type="EMBL" id="AF399555">
    <property type="protein sequence ID" value="AAK95040.1"/>
    <property type="molecule type" value="Genomic_DNA"/>
</dbReference>
<dbReference type="EMBL" id="BK004241">
    <property type="protein sequence ID" value="DAA04639.1"/>
    <property type="molecule type" value="Genomic_DNA"/>
</dbReference>
<dbReference type="CCDS" id="CCDS11022.1"/>
<dbReference type="RefSeq" id="NP_001373033.1">
    <property type="nucleotide sequence ID" value="NM_001386104.1"/>
</dbReference>
<dbReference type="RefSeq" id="NP_055380.2">
    <property type="nucleotide sequence ID" value="NM_014565.3"/>
</dbReference>
<dbReference type="SMR" id="Q9P1Q5"/>
<dbReference type="BioGRID" id="113973">
    <property type="interactions" value="7"/>
</dbReference>
<dbReference type="FunCoup" id="Q9P1Q5">
    <property type="interactions" value="454"/>
</dbReference>
<dbReference type="IntAct" id="Q9P1Q5">
    <property type="interactions" value="2"/>
</dbReference>
<dbReference type="STRING" id="9606.ENSP00000493179"/>
<dbReference type="GlyCosmos" id="Q9P1Q5">
    <property type="glycosylation" value="2 sites, No reported glycans"/>
</dbReference>
<dbReference type="GlyGen" id="Q9P1Q5">
    <property type="glycosylation" value="3 sites"/>
</dbReference>
<dbReference type="iPTMnet" id="Q9P1Q5"/>
<dbReference type="PhosphoSitePlus" id="Q9P1Q5"/>
<dbReference type="BioMuta" id="OR1A1"/>
<dbReference type="DMDM" id="212276451"/>
<dbReference type="MassIVE" id="Q9P1Q5"/>
<dbReference type="PaxDb" id="9606-ENSP00000305207"/>
<dbReference type="Antibodypedia" id="52929">
    <property type="antibodies" value="48 antibodies from 16 providers"/>
</dbReference>
<dbReference type="DNASU" id="8383"/>
<dbReference type="Ensembl" id="ENST00000641322.1">
    <property type="protein sequence ID" value="ENSP00000492897.1"/>
    <property type="gene ID" value="ENSG00000172146.4"/>
</dbReference>
<dbReference type="Ensembl" id="ENST00000641732.2">
    <property type="protein sequence ID" value="ENSP00000493179.1"/>
    <property type="gene ID" value="ENSG00000172146.4"/>
</dbReference>
<dbReference type="GeneID" id="8383"/>
<dbReference type="KEGG" id="hsa:8383"/>
<dbReference type="MANE-Select" id="ENST00000641732.2">
    <property type="protein sequence ID" value="ENSP00000493179.1"/>
    <property type="RefSeq nucleotide sequence ID" value="NM_014565.3"/>
    <property type="RefSeq protein sequence ID" value="NP_055380.2"/>
</dbReference>
<dbReference type="UCSC" id="uc010vrc.2">
    <property type="organism name" value="human"/>
</dbReference>
<dbReference type="AGR" id="HGNC:8179"/>
<dbReference type="CTD" id="8383"/>
<dbReference type="GeneCards" id="OR1A1"/>
<dbReference type="HGNC" id="HGNC:8179">
    <property type="gene designation" value="OR1A1"/>
</dbReference>
<dbReference type="HPA" id="ENSG00000172146">
    <property type="expression patterns" value="Tissue enhanced (retina)"/>
</dbReference>
<dbReference type="MIM" id="618046">
    <property type="type" value="gene"/>
</dbReference>
<dbReference type="neXtProt" id="NX_Q9P1Q5"/>
<dbReference type="PharmGKB" id="PA32051"/>
<dbReference type="VEuPathDB" id="HostDB:ENSG00000172146"/>
<dbReference type="eggNOG" id="ENOG502TF5D">
    <property type="taxonomic scope" value="Eukaryota"/>
</dbReference>
<dbReference type="GeneTree" id="ENSGT00900000141057"/>
<dbReference type="HOGENOM" id="CLU_012526_5_5_1"/>
<dbReference type="InParanoid" id="Q9P1Q5"/>
<dbReference type="OMA" id="QEDFFFT"/>
<dbReference type="OrthoDB" id="9444602at2759"/>
<dbReference type="PAN-GO" id="Q9P1Q5">
    <property type="GO annotations" value="3 GO annotations based on evolutionary models"/>
</dbReference>
<dbReference type="PhylomeDB" id="Q9P1Q5"/>
<dbReference type="TreeFam" id="TF337210"/>
<dbReference type="PathwayCommons" id="Q9P1Q5"/>
<dbReference type="Reactome" id="R-HSA-381753">
    <property type="pathway name" value="Olfactory Signaling Pathway"/>
</dbReference>
<dbReference type="Reactome" id="R-HSA-9752946">
    <property type="pathway name" value="Expression and translocation of olfactory receptors"/>
</dbReference>
<dbReference type="BioGRID-ORCS" id="8383">
    <property type="hits" value="6 hits in 746 CRISPR screens"/>
</dbReference>
<dbReference type="GeneWiki" id="OR1A1"/>
<dbReference type="GenomeRNAi" id="8383"/>
<dbReference type="Pharos" id="Q9P1Q5">
    <property type="development level" value="Tdark"/>
</dbReference>
<dbReference type="PRO" id="PR:Q9P1Q5"/>
<dbReference type="Proteomes" id="UP000005640">
    <property type="component" value="Chromosome 17"/>
</dbReference>
<dbReference type="RNAct" id="Q9P1Q5">
    <property type="molecule type" value="protein"/>
</dbReference>
<dbReference type="Bgee" id="ENSG00000172146">
    <property type="expression patterns" value="Expressed in male germ line stem cell (sensu Vertebrata) in testis"/>
</dbReference>
<dbReference type="ExpressionAtlas" id="Q9P1Q5">
    <property type="expression patterns" value="baseline and differential"/>
</dbReference>
<dbReference type="GO" id="GO:0005886">
    <property type="term" value="C:plasma membrane"/>
    <property type="evidence" value="ECO:0000318"/>
    <property type="project" value="GO_Central"/>
</dbReference>
<dbReference type="GO" id="GO:0004930">
    <property type="term" value="F:G protein-coupled receptor activity"/>
    <property type="evidence" value="ECO:0007669"/>
    <property type="project" value="UniProtKB-KW"/>
</dbReference>
<dbReference type="GO" id="GO:0004984">
    <property type="term" value="F:olfactory receptor activity"/>
    <property type="evidence" value="ECO:0000318"/>
    <property type="project" value="GO_Central"/>
</dbReference>
<dbReference type="GO" id="GO:0007165">
    <property type="term" value="P:signal transduction"/>
    <property type="evidence" value="ECO:0000318"/>
    <property type="project" value="GO_Central"/>
</dbReference>
<dbReference type="CDD" id="cd15235">
    <property type="entry name" value="7tmA_OR1A-like"/>
    <property type="match status" value="1"/>
</dbReference>
<dbReference type="FunFam" id="1.20.1070.10:FF:000082">
    <property type="entry name" value="Olfactory receptor 1A1"/>
    <property type="match status" value="1"/>
</dbReference>
<dbReference type="Gene3D" id="1.20.1070.10">
    <property type="entry name" value="Rhodopsin 7-helix transmembrane proteins"/>
    <property type="match status" value="1"/>
</dbReference>
<dbReference type="InterPro" id="IPR000276">
    <property type="entry name" value="GPCR_Rhodpsn"/>
</dbReference>
<dbReference type="InterPro" id="IPR017452">
    <property type="entry name" value="GPCR_Rhodpsn_7TM"/>
</dbReference>
<dbReference type="InterPro" id="IPR000725">
    <property type="entry name" value="Olfact_rcpt"/>
</dbReference>
<dbReference type="PANTHER" id="PTHR48001">
    <property type="entry name" value="OLFACTORY RECEPTOR"/>
    <property type="match status" value="1"/>
</dbReference>
<dbReference type="Pfam" id="PF13853">
    <property type="entry name" value="7tm_4"/>
    <property type="match status" value="1"/>
</dbReference>
<dbReference type="PRINTS" id="PR00237">
    <property type="entry name" value="GPCRRHODOPSN"/>
</dbReference>
<dbReference type="PRINTS" id="PR00245">
    <property type="entry name" value="OLFACTORYR"/>
</dbReference>
<dbReference type="SUPFAM" id="SSF81321">
    <property type="entry name" value="Family A G protein-coupled receptor-like"/>
    <property type="match status" value="1"/>
</dbReference>
<dbReference type="PROSITE" id="PS50262">
    <property type="entry name" value="G_PROTEIN_RECEP_F1_2"/>
    <property type="match status" value="1"/>
</dbReference>
<reference key="1">
    <citation type="journal article" date="2000" name="Genomics">
        <title>Sequence, structure, and evolution of a complete human olfactory receptor gene cluster.</title>
        <authorList>
            <person name="Glusman G."/>
            <person name="Sosinsky A."/>
            <person name="Ben-Asher E."/>
            <person name="Avidan N."/>
            <person name="Sonkin D."/>
            <person name="Bahar A."/>
            <person name="Rosenthal A."/>
            <person name="Clifton S."/>
            <person name="Roe B."/>
            <person name="Ferraz C."/>
            <person name="Demaille J.G."/>
            <person name="Lancet D."/>
        </authorList>
    </citation>
    <scope>NUCLEOTIDE SEQUENCE [GENOMIC DNA]</scope>
    <scope>VARIANT HIS-128</scope>
</reference>
<reference key="2">
    <citation type="submission" date="2005-09" db="EMBL/GenBank/DDBJ databases">
        <authorList>
            <person name="Mural R.J."/>
            <person name="Istrail S."/>
            <person name="Sutton G.G."/>
            <person name="Florea L."/>
            <person name="Halpern A.L."/>
            <person name="Mobarry C.M."/>
            <person name="Lippert R."/>
            <person name="Walenz B."/>
            <person name="Shatkay H."/>
            <person name="Dew I."/>
            <person name="Miller J.R."/>
            <person name="Flanigan M.J."/>
            <person name="Edwards N.J."/>
            <person name="Bolanos R."/>
            <person name="Fasulo D."/>
            <person name="Halldorsson B.V."/>
            <person name="Hannenhalli S."/>
            <person name="Turner R."/>
            <person name="Yooseph S."/>
            <person name="Lu F."/>
            <person name="Nusskern D.R."/>
            <person name="Shue B.C."/>
            <person name="Zheng X.H."/>
            <person name="Zhong F."/>
            <person name="Delcher A.L."/>
            <person name="Huson D.H."/>
            <person name="Kravitz S.A."/>
            <person name="Mouchard L."/>
            <person name="Reinert K."/>
            <person name="Remington K.A."/>
            <person name="Clark A.G."/>
            <person name="Waterman M.S."/>
            <person name="Eichler E.E."/>
            <person name="Adams M.D."/>
            <person name="Hunkapiller M.W."/>
            <person name="Myers E.W."/>
            <person name="Venter J.C."/>
        </authorList>
    </citation>
    <scope>NUCLEOTIDE SEQUENCE [LARGE SCALE GENOMIC DNA]</scope>
</reference>
<reference key="3">
    <citation type="journal article" date="2004" name="Genome Res.">
        <title>The status, quality, and expansion of the NIH full-length cDNA project: the Mammalian Gene Collection (MGC).</title>
        <authorList>
            <consortium name="The MGC Project Team"/>
        </authorList>
    </citation>
    <scope>NUCLEOTIDE SEQUENCE [LARGE SCALE MRNA]</scope>
    <scope>VARIANT SER-285</scope>
</reference>
<reference key="4">
    <citation type="journal article" date="2002" name="Genomics">
        <title>DEFOG: a practical scheme for deciphering families of genes.</title>
        <authorList>
            <person name="Fuchs T."/>
            <person name="Malecova B."/>
            <person name="Linhart C."/>
            <person name="Sharan R."/>
            <person name="Khen M."/>
            <person name="Herwig R."/>
            <person name="Shmulevich D."/>
            <person name="Elkon R."/>
            <person name="Steinfath M."/>
            <person name="O'Brien J.K."/>
            <person name="Radelof U."/>
            <person name="Lehrach H."/>
            <person name="Lancet D."/>
            <person name="Shamir R."/>
        </authorList>
    </citation>
    <scope>NUCLEOTIDE SEQUENCE [GENOMIC DNA] OF 68-281</scope>
    <scope>VARIANT HIS-128</scope>
</reference>
<reference key="5">
    <citation type="journal article" date="2004" name="Proc. Natl. Acad. Sci. U.S.A.">
        <title>The human olfactory receptor gene family.</title>
        <authorList>
            <person name="Malnic B."/>
            <person name="Godfrey P.A."/>
            <person name="Buck L.B."/>
        </authorList>
    </citation>
    <scope>IDENTIFICATION</scope>
</reference>
<reference key="6">
    <citation type="journal article" date="2004" name="Proc. Natl. Acad. Sci. U.S.A.">
        <authorList>
            <person name="Malnic B."/>
            <person name="Godfrey P.A."/>
            <person name="Buck L.B."/>
        </authorList>
    </citation>
    <scope>ERRATUM OF PUBMED:14983052</scope>
</reference>
<accession>Q9P1Q5</accession>
<accession>A5D914</accession>
<accession>Q6IFM1</accession>
<accession>Q6NTA9</accession>
<accession>Q96R87</accession>
<sequence>MRENNQSSTLEFILLGVTGQQEQEDFFYILFLFIYPITLIGNLLIVLAICSDVRLHNPMYFLLANLSLVDIFFSSVTIPKMLANHLLGSKSISFGGCLTQMYFMIALGNTDSYILAAMAYDRAVAISRPLHYTTIMSPRSCIWLIAGSWVIGNANALPHTLLTASLSFCGNQEVANFYCDITPLLKLSCSDIHFHVKMMYLGVGIFSVPLLCIIVSYIRVFSTVFQVPSTKGVLKAFSTCGSHLTVVSLYYGTVMGTYFRPLTNYSLKDAVITVMYTAVTPMLNPFIYSLRNRDMKAALRKLFNKRISS</sequence>